<organism>
    <name type="scientific">Schizosaccharomyces pombe (strain 972 / ATCC 24843)</name>
    <name type="common">Fission yeast</name>
    <dbReference type="NCBI Taxonomy" id="284812"/>
    <lineage>
        <taxon>Eukaryota</taxon>
        <taxon>Fungi</taxon>
        <taxon>Dikarya</taxon>
        <taxon>Ascomycota</taxon>
        <taxon>Taphrinomycotina</taxon>
        <taxon>Schizosaccharomycetes</taxon>
        <taxon>Schizosaccharomycetales</taxon>
        <taxon>Schizosaccharomycetaceae</taxon>
        <taxon>Schizosaccharomyces</taxon>
    </lineage>
</organism>
<dbReference type="EC" id="2.3.2.31" evidence="2"/>
<dbReference type="EMBL" id="CU329670">
    <property type="protein sequence ID" value="CAB65614.1"/>
    <property type="molecule type" value="Genomic_DNA"/>
</dbReference>
<dbReference type="RefSeq" id="NP_593502.1">
    <property type="nucleotide sequence ID" value="NM_001018936.2"/>
</dbReference>
<dbReference type="BioGRID" id="279692">
    <property type="interactions" value="1"/>
</dbReference>
<dbReference type="FunCoup" id="Q9US46">
    <property type="interactions" value="156"/>
</dbReference>
<dbReference type="STRING" id="284812.Q9US46"/>
<dbReference type="iPTMnet" id="Q9US46"/>
<dbReference type="PaxDb" id="4896-SPAC1002.14.1"/>
<dbReference type="EnsemblFungi" id="SPAC1002.14.1">
    <property type="protein sequence ID" value="SPAC1002.14.1:pep"/>
    <property type="gene ID" value="SPAC1002.14"/>
</dbReference>
<dbReference type="GeneID" id="2543264"/>
<dbReference type="KEGG" id="spo:2543264"/>
<dbReference type="PomBase" id="SPAC1002.14">
    <property type="gene designation" value="itt1"/>
</dbReference>
<dbReference type="VEuPathDB" id="FungiDB:SPAC1002.14"/>
<dbReference type="eggNOG" id="KOG1814">
    <property type="taxonomic scope" value="Eukaryota"/>
</dbReference>
<dbReference type="HOGENOM" id="CLU_021364_2_2_1"/>
<dbReference type="InParanoid" id="Q9US46"/>
<dbReference type="OMA" id="PRSWCQG"/>
<dbReference type="PhylomeDB" id="Q9US46"/>
<dbReference type="Reactome" id="R-SPO-983168">
    <property type="pathway name" value="Antigen processing: Ubiquitination &amp; Proteasome degradation"/>
</dbReference>
<dbReference type="UniPathway" id="UPA00143"/>
<dbReference type="PRO" id="PR:Q9US46"/>
<dbReference type="Proteomes" id="UP000002485">
    <property type="component" value="Chromosome I"/>
</dbReference>
<dbReference type="GO" id="GO:0005737">
    <property type="term" value="C:cytoplasm"/>
    <property type="evidence" value="ECO:0000318"/>
    <property type="project" value="GO_Central"/>
</dbReference>
<dbReference type="GO" id="GO:0005829">
    <property type="term" value="C:cytosol"/>
    <property type="evidence" value="ECO:0007005"/>
    <property type="project" value="PomBase"/>
</dbReference>
<dbReference type="GO" id="GO:0005634">
    <property type="term" value="C:nucleus"/>
    <property type="evidence" value="ECO:0007005"/>
    <property type="project" value="PomBase"/>
</dbReference>
<dbReference type="GO" id="GO:0000151">
    <property type="term" value="C:ubiquitin ligase complex"/>
    <property type="evidence" value="ECO:0000318"/>
    <property type="project" value="GO_Central"/>
</dbReference>
<dbReference type="GO" id="GO:0031624">
    <property type="term" value="F:ubiquitin conjugating enzyme binding"/>
    <property type="evidence" value="ECO:0000318"/>
    <property type="project" value="GO_Central"/>
</dbReference>
<dbReference type="GO" id="GO:0061630">
    <property type="term" value="F:ubiquitin protein ligase activity"/>
    <property type="evidence" value="ECO:0000318"/>
    <property type="project" value="GO_Central"/>
</dbReference>
<dbReference type="GO" id="GO:0008270">
    <property type="term" value="F:zinc ion binding"/>
    <property type="evidence" value="ECO:0000255"/>
    <property type="project" value="PomBase"/>
</dbReference>
<dbReference type="GO" id="GO:0016567">
    <property type="term" value="P:protein ubiquitination"/>
    <property type="evidence" value="ECO:0007669"/>
    <property type="project" value="UniProtKB-UniPathway"/>
</dbReference>
<dbReference type="GO" id="GO:1990580">
    <property type="term" value="P:regulation of cytoplasmic translational termination"/>
    <property type="evidence" value="ECO:0000266"/>
    <property type="project" value="PomBase"/>
</dbReference>
<dbReference type="GO" id="GO:0006511">
    <property type="term" value="P:ubiquitin-dependent protein catabolic process"/>
    <property type="evidence" value="ECO:0000318"/>
    <property type="project" value="GO_Central"/>
</dbReference>
<dbReference type="CDD" id="cd20341">
    <property type="entry name" value="BRcat_RBR_RNF14"/>
    <property type="match status" value="1"/>
</dbReference>
<dbReference type="CDD" id="cd20354">
    <property type="entry name" value="Rcat_RBR_RNF14"/>
    <property type="match status" value="1"/>
</dbReference>
<dbReference type="CDD" id="cd23134">
    <property type="entry name" value="RING-HC_ITT1-like"/>
    <property type="match status" value="1"/>
</dbReference>
<dbReference type="CDD" id="cd23820">
    <property type="entry name" value="RWD_RNF14"/>
    <property type="match status" value="1"/>
</dbReference>
<dbReference type="FunFam" id="1.20.120.1750:FF:000073">
    <property type="entry name" value="RBR-type E3 ubiquitin transferase"/>
    <property type="match status" value="1"/>
</dbReference>
<dbReference type="FunFam" id="3.30.40.10:FF:000416">
    <property type="entry name" value="RBR-type E3 ubiquitin transferase"/>
    <property type="match status" value="1"/>
</dbReference>
<dbReference type="Gene3D" id="1.20.120.1750">
    <property type="match status" value="1"/>
</dbReference>
<dbReference type="Gene3D" id="2.20.25.20">
    <property type="match status" value="1"/>
</dbReference>
<dbReference type="Gene3D" id="3.10.110.10">
    <property type="entry name" value="Ubiquitin Conjugating Enzyme"/>
    <property type="match status" value="1"/>
</dbReference>
<dbReference type="Gene3D" id="3.30.40.10">
    <property type="entry name" value="Zinc/RING finger domain, C3HC4 (zinc finger)"/>
    <property type="match status" value="1"/>
</dbReference>
<dbReference type="InterPro" id="IPR031127">
    <property type="entry name" value="E3_UB_ligase_RBR"/>
</dbReference>
<dbReference type="InterPro" id="IPR002867">
    <property type="entry name" value="IBR_dom"/>
</dbReference>
<dbReference type="InterPro" id="IPR047548">
    <property type="entry name" value="Rcat_RBR_RNF14"/>
</dbReference>
<dbReference type="InterPro" id="IPR006575">
    <property type="entry name" value="RWD_dom"/>
</dbReference>
<dbReference type="InterPro" id="IPR044066">
    <property type="entry name" value="TRIAD_supradom"/>
</dbReference>
<dbReference type="InterPro" id="IPR016135">
    <property type="entry name" value="UBQ-conjugating_enzyme/RWD"/>
</dbReference>
<dbReference type="InterPro" id="IPR001841">
    <property type="entry name" value="Znf_RING"/>
</dbReference>
<dbReference type="InterPro" id="IPR013083">
    <property type="entry name" value="Znf_RING/FYVE/PHD"/>
</dbReference>
<dbReference type="PANTHER" id="PTHR11685">
    <property type="entry name" value="RBR FAMILY RING FINGER AND IBR DOMAIN-CONTAINING"/>
    <property type="match status" value="1"/>
</dbReference>
<dbReference type="Pfam" id="PF01485">
    <property type="entry name" value="IBR"/>
    <property type="match status" value="1"/>
</dbReference>
<dbReference type="Pfam" id="PF05773">
    <property type="entry name" value="RWD"/>
    <property type="match status" value="1"/>
</dbReference>
<dbReference type="Pfam" id="PF14634">
    <property type="entry name" value="zf-RING_5"/>
    <property type="match status" value="1"/>
</dbReference>
<dbReference type="SMART" id="SM00647">
    <property type="entry name" value="IBR"/>
    <property type="match status" value="2"/>
</dbReference>
<dbReference type="SMART" id="SM00591">
    <property type="entry name" value="RWD"/>
    <property type="match status" value="1"/>
</dbReference>
<dbReference type="SUPFAM" id="SSF57850">
    <property type="entry name" value="RING/U-box"/>
    <property type="match status" value="3"/>
</dbReference>
<dbReference type="SUPFAM" id="SSF54495">
    <property type="entry name" value="UBC-like"/>
    <property type="match status" value="1"/>
</dbReference>
<dbReference type="PROSITE" id="PS50908">
    <property type="entry name" value="RWD"/>
    <property type="match status" value="1"/>
</dbReference>
<dbReference type="PROSITE" id="PS51873">
    <property type="entry name" value="TRIAD"/>
    <property type="match status" value="1"/>
</dbReference>
<dbReference type="PROSITE" id="PS50089">
    <property type="entry name" value="ZF_RING_2"/>
    <property type="match status" value="1"/>
</dbReference>
<comment type="function">
    <text evidence="2">E3 ubiquitin-protein ligase involved in the rescue of stalled ribosomes by promoting ubiquitination and degradation of proteins on stalled ribosomes. Specifically required to resolve RNA-protein cross-links caused by reactive aldehydes, which trigger translation stress by stalling ribosomes: acts by catalying 'Lys-6'-linked ubiquitination of RNA-protein cross-links, leading to their degradation.</text>
</comment>
<comment type="catalytic activity">
    <reaction evidence="3">
        <text>[E2 ubiquitin-conjugating enzyme]-S-ubiquitinyl-L-cysteine + [acceptor protein]-L-lysine = [E2 ubiquitin-conjugating enzyme]-L-cysteine + [acceptor protein]-N(6)-ubiquitinyl-L-lysine.</text>
        <dbReference type="EC" id="2.3.2.31"/>
    </reaction>
</comment>
<comment type="pathway">
    <text evidence="2">Protein modification; protein ubiquitination.</text>
</comment>
<comment type="subcellular location">
    <subcellularLocation>
        <location evidence="6">Cytoplasm</location>
    </subcellularLocation>
    <subcellularLocation>
        <location evidence="6">Nucleus</location>
    </subcellularLocation>
</comment>
<comment type="domain">
    <text evidence="1">Members of the RBR family are atypical E3 ligases. They interact with the E2 conjugating enzyme UBE2L3 and function like HECT-type E3 enzymes: they bind E2s via the first RING domain, but require an obligate trans-thiolation step during the ubiquitin transfer, requiring a conserved cysteine residue in the second RING domain.</text>
</comment>
<comment type="similarity">
    <text evidence="7">Belongs to the RBR family. RNF14 subfamily.</text>
</comment>
<name>ITT1_SCHPO</name>
<sequence length="435" mass="50297">MLEVEVESDNKHLVADELIALQSIYPEIHLDGNNYGRLNIPVNTESDYFLSFKSPDESTLTDTIVVRHFPDLVMEFFLPEAYPFNSPPTFFLKSSWLPLKQKRVLTSSLIKLWNEIHDCVLFDAIEHVRSIATIAFHLPTEMVFPGGFDDLKKEILAFDKNAKLLEFQIRKFQCNVCFDEFNGTDCFQLTRCGHVSCQSCLRDYYTMCIQEGMFSQIKCIDLDCGKDAPVLTLKELESIVGVQLTNRYKELEEKRRYENDSNIIFCPRSFCQGPSKRDPGQKLAICQKCDFAFCSFCQATWHGDLSPCKLEGDSKKLVEMYLNYQENEPEKALELEKRYGKRIIDRLVEQVKNDEEAEKWVLLNGQRCPTCDRVVERIDGCCHMNCLCGTHFCFLCGAYLMEQNPYKHFNDPVSSCYGMLFASAAEKQRFSENWT</sequence>
<protein>
    <recommendedName>
        <fullName>E3 ubiquitin-protein ligase itt1</fullName>
        <ecNumber evidence="2">2.3.2.31</ecNumber>
    </recommendedName>
    <alternativeName>
        <fullName>RING finger protein itt1</fullName>
    </alternativeName>
    <alternativeName>
        <fullName evidence="7">RING-type E3 ubiquitin transferase itt1</fullName>
    </alternativeName>
</protein>
<evidence type="ECO:0000250" key="1">
    <source>
        <dbReference type="UniProtKB" id="O60260"/>
    </source>
</evidence>
<evidence type="ECO:0000250" key="2">
    <source>
        <dbReference type="UniProtKB" id="Q04638"/>
    </source>
</evidence>
<evidence type="ECO:0000250" key="3">
    <source>
        <dbReference type="UniProtKB" id="Q9UBS8"/>
    </source>
</evidence>
<evidence type="ECO:0000255" key="4">
    <source>
        <dbReference type="PROSITE-ProRule" id="PRU00179"/>
    </source>
</evidence>
<evidence type="ECO:0000255" key="5">
    <source>
        <dbReference type="PROSITE-ProRule" id="PRU01221"/>
    </source>
</evidence>
<evidence type="ECO:0000269" key="6">
    <source>
    </source>
</evidence>
<evidence type="ECO:0000305" key="7"/>
<feature type="chain" id="PRO_0000372422" description="E3 ubiquitin-protein ligase itt1">
    <location>
        <begin position="1"/>
        <end position="435"/>
    </location>
</feature>
<feature type="domain" description="RWD" evidence="4">
    <location>
        <begin position="16"/>
        <end position="135"/>
    </location>
</feature>
<feature type="zinc finger region" description="RING-type 1" evidence="5">
    <location>
        <begin position="174"/>
        <end position="224"/>
    </location>
</feature>
<feature type="zinc finger region" description="IBR-type" evidence="5">
    <location>
        <begin position="245"/>
        <end position="308"/>
    </location>
</feature>
<feature type="zinc finger region" description="RING-type 2; atypical" evidence="5">
    <location>
        <begin position="368"/>
        <end position="396"/>
    </location>
</feature>
<feature type="region of interest" description="TRIAD supradomain" evidence="5">
    <location>
        <begin position="170"/>
        <end position="420"/>
    </location>
</feature>
<feature type="active site" evidence="5">
    <location>
        <position position="381"/>
    </location>
</feature>
<feature type="binding site" evidence="5">
    <location>
        <position position="174"/>
    </location>
    <ligand>
        <name>Zn(2+)</name>
        <dbReference type="ChEBI" id="CHEBI:29105"/>
        <label>1</label>
    </ligand>
</feature>
<feature type="binding site" evidence="5">
    <location>
        <position position="177"/>
    </location>
    <ligand>
        <name>Zn(2+)</name>
        <dbReference type="ChEBI" id="CHEBI:29105"/>
        <label>1</label>
    </ligand>
</feature>
<feature type="binding site" evidence="5">
    <location>
        <position position="192"/>
    </location>
    <ligand>
        <name>Zn(2+)</name>
        <dbReference type="ChEBI" id="CHEBI:29105"/>
        <label>2</label>
    </ligand>
</feature>
<feature type="binding site" evidence="5">
    <location>
        <position position="194"/>
    </location>
    <ligand>
        <name>Zn(2+)</name>
        <dbReference type="ChEBI" id="CHEBI:29105"/>
        <label>2</label>
    </ligand>
</feature>
<feature type="binding site" evidence="5">
    <location>
        <position position="197"/>
    </location>
    <ligand>
        <name>Zn(2+)</name>
        <dbReference type="ChEBI" id="CHEBI:29105"/>
        <label>1</label>
    </ligand>
</feature>
<feature type="binding site" evidence="5">
    <location>
        <position position="200"/>
    </location>
    <ligand>
        <name>Zn(2+)</name>
        <dbReference type="ChEBI" id="CHEBI:29105"/>
        <label>1</label>
    </ligand>
</feature>
<feature type="binding site" evidence="5">
    <location>
        <position position="219"/>
    </location>
    <ligand>
        <name>Zn(2+)</name>
        <dbReference type="ChEBI" id="CHEBI:29105"/>
        <label>2</label>
    </ligand>
</feature>
<feature type="binding site" evidence="5">
    <location>
        <position position="224"/>
    </location>
    <ligand>
        <name>Zn(2+)</name>
        <dbReference type="ChEBI" id="CHEBI:29105"/>
        <label>2</label>
    </ligand>
</feature>
<feature type="binding site" evidence="5">
    <location>
        <position position="266"/>
    </location>
    <ligand>
        <name>Zn(2+)</name>
        <dbReference type="ChEBI" id="CHEBI:29105"/>
        <label>3</label>
    </ligand>
</feature>
<feature type="binding site" evidence="5">
    <location>
        <position position="271"/>
    </location>
    <ligand>
        <name>Zn(2+)</name>
        <dbReference type="ChEBI" id="CHEBI:29105"/>
        <label>3</label>
    </ligand>
</feature>
<feature type="binding site" evidence="5">
    <location>
        <position position="286"/>
    </location>
    <ligand>
        <name>Zn(2+)</name>
        <dbReference type="ChEBI" id="CHEBI:29105"/>
        <label>3</label>
    </ligand>
</feature>
<feature type="binding site" evidence="5">
    <location>
        <position position="289"/>
    </location>
    <ligand>
        <name>Zn(2+)</name>
        <dbReference type="ChEBI" id="CHEBI:29105"/>
        <label>3</label>
    </ligand>
</feature>
<feature type="binding site" evidence="5">
    <location>
        <position position="294"/>
    </location>
    <ligand>
        <name>Zn(2+)</name>
        <dbReference type="ChEBI" id="CHEBI:29105"/>
        <label>4</label>
    </ligand>
</feature>
<feature type="binding site" evidence="5">
    <location>
        <position position="297"/>
    </location>
    <ligand>
        <name>Zn(2+)</name>
        <dbReference type="ChEBI" id="CHEBI:29105"/>
        <label>4</label>
    </ligand>
</feature>
<feature type="binding site" evidence="5">
    <location>
        <position position="302"/>
    </location>
    <ligand>
        <name>Zn(2+)</name>
        <dbReference type="ChEBI" id="CHEBI:29105"/>
        <label>4</label>
    </ligand>
</feature>
<feature type="binding site" evidence="5">
    <location>
        <position position="308"/>
    </location>
    <ligand>
        <name>Zn(2+)</name>
        <dbReference type="ChEBI" id="CHEBI:29105"/>
        <label>4</label>
    </ligand>
</feature>
<feature type="binding site" evidence="5">
    <location>
        <position position="368"/>
    </location>
    <ligand>
        <name>Zn(2+)</name>
        <dbReference type="ChEBI" id="CHEBI:29105"/>
        <label>5</label>
    </ligand>
</feature>
<feature type="binding site" evidence="5">
    <location>
        <position position="371"/>
    </location>
    <ligand>
        <name>Zn(2+)</name>
        <dbReference type="ChEBI" id="CHEBI:29105"/>
        <label>5</label>
    </ligand>
</feature>
<feature type="binding site" evidence="5">
    <location>
        <position position="386"/>
    </location>
    <ligand>
        <name>Zn(2+)</name>
        <dbReference type="ChEBI" id="CHEBI:29105"/>
        <label>5</label>
    </ligand>
</feature>
<feature type="binding site" evidence="5">
    <location>
        <position position="388"/>
    </location>
    <ligand>
        <name>Zn(2+)</name>
        <dbReference type="ChEBI" id="CHEBI:29105"/>
        <label>5</label>
    </ligand>
</feature>
<feature type="binding site" evidence="5">
    <location>
        <position position="393"/>
    </location>
    <ligand>
        <name>Zn(2+)</name>
        <dbReference type="ChEBI" id="CHEBI:29105"/>
        <label>6</label>
    </ligand>
</feature>
<feature type="binding site" evidence="5">
    <location>
        <position position="396"/>
    </location>
    <ligand>
        <name>Zn(2+)</name>
        <dbReference type="ChEBI" id="CHEBI:29105"/>
        <label>6</label>
    </ligand>
</feature>
<feature type="binding site" evidence="5">
    <location>
        <position position="408"/>
    </location>
    <ligand>
        <name>Zn(2+)</name>
        <dbReference type="ChEBI" id="CHEBI:29105"/>
        <label>6</label>
    </ligand>
</feature>
<feature type="binding site" evidence="5">
    <location>
        <position position="416"/>
    </location>
    <ligand>
        <name>Zn(2+)</name>
        <dbReference type="ChEBI" id="CHEBI:29105"/>
        <label>6</label>
    </ligand>
</feature>
<reference key="1">
    <citation type="journal article" date="2002" name="Nature">
        <title>The genome sequence of Schizosaccharomyces pombe.</title>
        <authorList>
            <person name="Wood V."/>
            <person name="Gwilliam R."/>
            <person name="Rajandream M.A."/>
            <person name="Lyne M.H."/>
            <person name="Lyne R."/>
            <person name="Stewart A."/>
            <person name="Sgouros J.G."/>
            <person name="Peat N."/>
            <person name="Hayles J."/>
            <person name="Baker S.G."/>
            <person name="Basham D."/>
            <person name="Bowman S."/>
            <person name="Brooks K."/>
            <person name="Brown D."/>
            <person name="Brown S."/>
            <person name="Chillingworth T."/>
            <person name="Churcher C.M."/>
            <person name="Collins M."/>
            <person name="Connor R."/>
            <person name="Cronin A."/>
            <person name="Davis P."/>
            <person name="Feltwell T."/>
            <person name="Fraser A."/>
            <person name="Gentles S."/>
            <person name="Goble A."/>
            <person name="Hamlin N."/>
            <person name="Harris D.E."/>
            <person name="Hidalgo J."/>
            <person name="Hodgson G."/>
            <person name="Holroyd S."/>
            <person name="Hornsby T."/>
            <person name="Howarth S."/>
            <person name="Huckle E.J."/>
            <person name="Hunt S."/>
            <person name="Jagels K."/>
            <person name="James K.D."/>
            <person name="Jones L."/>
            <person name="Jones M."/>
            <person name="Leather S."/>
            <person name="McDonald S."/>
            <person name="McLean J."/>
            <person name="Mooney P."/>
            <person name="Moule S."/>
            <person name="Mungall K.L."/>
            <person name="Murphy L.D."/>
            <person name="Niblett D."/>
            <person name="Odell C."/>
            <person name="Oliver K."/>
            <person name="O'Neil S."/>
            <person name="Pearson D."/>
            <person name="Quail M.A."/>
            <person name="Rabbinowitsch E."/>
            <person name="Rutherford K.M."/>
            <person name="Rutter S."/>
            <person name="Saunders D."/>
            <person name="Seeger K."/>
            <person name="Sharp S."/>
            <person name="Skelton J."/>
            <person name="Simmonds M.N."/>
            <person name="Squares R."/>
            <person name="Squares S."/>
            <person name="Stevens K."/>
            <person name="Taylor K."/>
            <person name="Taylor R.G."/>
            <person name="Tivey A."/>
            <person name="Walsh S.V."/>
            <person name="Warren T."/>
            <person name="Whitehead S."/>
            <person name="Woodward J.R."/>
            <person name="Volckaert G."/>
            <person name="Aert R."/>
            <person name="Robben J."/>
            <person name="Grymonprez B."/>
            <person name="Weltjens I."/>
            <person name="Vanstreels E."/>
            <person name="Rieger M."/>
            <person name="Schaefer M."/>
            <person name="Mueller-Auer S."/>
            <person name="Gabel C."/>
            <person name="Fuchs M."/>
            <person name="Duesterhoeft A."/>
            <person name="Fritzc C."/>
            <person name="Holzer E."/>
            <person name="Moestl D."/>
            <person name="Hilbert H."/>
            <person name="Borzym K."/>
            <person name="Langer I."/>
            <person name="Beck A."/>
            <person name="Lehrach H."/>
            <person name="Reinhardt R."/>
            <person name="Pohl T.M."/>
            <person name="Eger P."/>
            <person name="Zimmermann W."/>
            <person name="Wedler H."/>
            <person name="Wambutt R."/>
            <person name="Purnelle B."/>
            <person name="Goffeau A."/>
            <person name="Cadieu E."/>
            <person name="Dreano S."/>
            <person name="Gloux S."/>
            <person name="Lelaure V."/>
            <person name="Mottier S."/>
            <person name="Galibert F."/>
            <person name="Aves S.J."/>
            <person name="Xiang Z."/>
            <person name="Hunt C."/>
            <person name="Moore K."/>
            <person name="Hurst S.M."/>
            <person name="Lucas M."/>
            <person name="Rochet M."/>
            <person name="Gaillardin C."/>
            <person name="Tallada V.A."/>
            <person name="Garzon A."/>
            <person name="Thode G."/>
            <person name="Daga R.R."/>
            <person name="Cruzado L."/>
            <person name="Jimenez J."/>
            <person name="Sanchez M."/>
            <person name="del Rey F."/>
            <person name="Benito J."/>
            <person name="Dominguez A."/>
            <person name="Revuelta J.L."/>
            <person name="Moreno S."/>
            <person name="Armstrong J."/>
            <person name="Forsburg S.L."/>
            <person name="Cerutti L."/>
            <person name="Lowe T."/>
            <person name="McCombie W.R."/>
            <person name="Paulsen I."/>
            <person name="Potashkin J."/>
            <person name="Shpakovski G.V."/>
            <person name="Ussery D."/>
            <person name="Barrell B.G."/>
            <person name="Nurse P."/>
        </authorList>
    </citation>
    <scope>NUCLEOTIDE SEQUENCE [LARGE SCALE GENOMIC DNA]</scope>
    <source>
        <strain>972 / ATCC 24843</strain>
    </source>
</reference>
<reference key="2">
    <citation type="journal article" date="2006" name="Nat. Biotechnol.">
        <title>ORFeome cloning and global analysis of protein localization in the fission yeast Schizosaccharomyces pombe.</title>
        <authorList>
            <person name="Matsuyama A."/>
            <person name="Arai R."/>
            <person name="Yashiroda Y."/>
            <person name="Shirai A."/>
            <person name="Kamata A."/>
            <person name="Sekido S."/>
            <person name="Kobayashi Y."/>
            <person name="Hashimoto A."/>
            <person name="Hamamoto M."/>
            <person name="Hiraoka Y."/>
            <person name="Horinouchi S."/>
            <person name="Yoshida M."/>
        </authorList>
    </citation>
    <scope>SUBCELLULAR LOCATION [LARGE SCALE ANALYSIS]</scope>
</reference>
<accession>Q9US46</accession>
<gene>
    <name type="primary">itt1</name>
    <name type="ORF">SPAC1002.14</name>
</gene>
<proteinExistence type="inferred from homology"/>
<keyword id="KW-0963">Cytoplasm</keyword>
<keyword id="KW-0479">Metal-binding</keyword>
<keyword id="KW-0539">Nucleus</keyword>
<keyword id="KW-1185">Reference proteome</keyword>
<keyword id="KW-0677">Repeat</keyword>
<keyword id="KW-0808">Transferase</keyword>
<keyword id="KW-0833">Ubl conjugation pathway</keyword>
<keyword id="KW-0862">Zinc</keyword>
<keyword id="KW-0863">Zinc-finger</keyword>